<accession>Q6G438</accession>
<organism>
    <name type="scientific">Bartonella henselae (strain ATCC 49882 / DSM 28221 / CCUG 30454 / Houston 1)</name>
    <name type="common">Rochalimaea henselae</name>
    <dbReference type="NCBI Taxonomy" id="283166"/>
    <lineage>
        <taxon>Bacteria</taxon>
        <taxon>Pseudomonadati</taxon>
        <taxon>Pseudomonadota</taxon>
        <taxon>Alphaproteobacteria</taxon>
        <taxon>Hyphomicrobiales</taxon>
        <taxon>Bartonellaceae</taxon>
        <taxon>Bartonella</taxon>
    </lineage>
</organism>
<reference key="1">
    <citation type="journal article" date="2004" name="Proc. Natl. Acad. Sci. U.S.A.">
        <title>The louse-borne human pathogen Bartonella quintana is a genomic derivative of the zoonotic agent Bartonella henselae.</title>
        <authorList>
            <person name="Alsmark U.C.M."/>
            <person name="Frank A.C."/>
            <person name="Karlberg E.O."/>
            <person name="Legault B.-A."/>
            <person name="Ardell D.H."/>
            <person name="Canbaeck B."/>
            <person name="Eriksson A.-S."/>
            <person name="Naeslund A.K."/>
            <person name="Handley S.A."/>
            <person name="Huvet M."/>
            <person name="La Scola B."/>
            <person name="Holmberg M."/>
            <person name="Andersson S.G.E."/>
        </authorList>
    </citation>
    <scope>NUCLEOTIDE SEQUENCE [LARGE SCALE GENOMIC DNA]</scope>
    <source>
        <strain>ATCC 49882 / DSM 28221 / CCUG 30454 / Houston 1</strain>
    </source>
</reference>
<feature type="chain" id="PRO_0000101487" description="Ribosomal RNA small subunit methyltransferase A">
    <location>
        <begin position="1"/>
        <end position="276"/>
    </location>
</feature>
<feature type="binding site" evidence="1">
    <location>
        <position position="27"/>
    </location>
    <ligand>
        <name>S-adenosyl-L-methionine</name>
        <dbReference type="ChEBI" id="CHEBI:59789"/>
    </ligand>
</feature>
<feature type="binding site" evidence="1">
    <location>
        <position position="29"/>
    </location>
    <ligand>
        <name>S-adenosyl-L-methionine</name>
        <dbReference type="ChEBI" id="CHEBI:59789"/>
    </ligand>
</feature>
<feature type="binding site" evidence="1">
    <location>
        <position position="54"/>
    </location>
    <ligand>
        <name>S-adenosyl-L-methionine</name>
        <dbReference type="ChEBI" id="CHEBI:59789"/>
    </ligand>
</feature>
<feature type="binding site" evidence="1">
    <location>
        <position position="75"/>
    </location>
    <ligand>
        <name>S-adenosyl-L-methionine</name>
        <dbReference type="ChEBI" id="CHEBI:59789"/>
    </ligand>
</feature>
<feature type="binding site" evidence="1">
    <location>
        <position position="101"/>
    </location>
    <ligand>
        <name>S-adenosyl-L-methionine</name>
        <dbReference type="ChEBI" id="CHEBI:59789"/>
    </ligand>
</feature>
<feature type="binding site" evidence="1">
    <location>
        <position position="123"/>
    </location>
    <ligand>
        <name>S-adenosyl-L-methionine</name>
        <dbReference type="ChEBI" id="CHEBI:59789"/>
    </ligand>
</feature>
<comment type="function">
    <text evidence="1">Specifically dimethylates two adjacent adenosines (A1518 and A1519) in the loop of a conserved hairpin near the 3'-end of 16S rRNA in the 30S particle. May play a critical role in biogenesis of 30S subunits.</text>
</comment>
<comment type="catalytic activity">
    <reaction evidence="1">
        <text>adenosine(1518)/adenosine(1519) in 16S rRNA + 4 S-adenosyl-L-methionine = N(6)-dimethyladenosine(1518)/N(6)-dimethyladenosine(1519) in 16S rRNA + 4 S-adenosyl-L-homocysteine + 4 H(+)</text>
        <dbReference type="Rhea" id="RHEA:19609"/>
        <dbReference type="Rhea" id="RHEA-COMP:10232"/>
        <dbReference type="Rhea" id="RHEA-COMP:10233"/>
        <dbReference type="ChEBI" id="CHEBI:15378"/>
        <dbReference type="ChEBI" id="CHEBI:57856"/>
        <dbReference type="ChEBI" id="CHEBI:59789"/>
        <dbReference type="ChEBI" id="CHEBI:74411"/>
        <dbReference type="ChEBI" id="CHEBI:74493"/>
        <dbReference type="EC" id="2.1.1.182"/>
    </reaction>
</comment>
<comment type="subcellular location">
    <subcellularLocation>
        <location evidence="1">Cytoplasm</location>
    </subcellularLocation>
</comment>
<comment type="similarity">
    <text evidence="1">Belongs to the class I-like SAM-binding methyltransferase superfamily. rRNA adenine N(6)-methyltransferase family. RsmA subfamily.</text>
</comment>
<gene>
    <name evidence="1" type="primary">rsmA</name>
    <name evidence="1" type="synonym">ksgA</name>
    <name type="ordered locus">BH05400</name>
</gene>
<evidence type="ECO:0000255" key="1">
    <source>
        <dbReference type="HAMAP-Rule" id="MF_00607"/>
    </source>
</evidence>
<dbReference type="EC" id="2.1.1.182" evidence="1"/>
<dbReference type="EMBL" id="BX897699">
    <property type="protein sequence ID" value="CAF27348.1"/>
    <property type="molecule type" value="Genomic_DNA"/>
</dbReference>
<dbReference type="RefSeq" id="WP_011180470.1">
    <property type="nucleotide sequence ID" value="NZ_LRIJ02000001.1"/>
</dbReference>
<dbReference type="SMR" id="Q6G438"/>
<dbReference type="PaxDb" id="283166-BH05400"/>
<dbReference type="EnsemblBacteria" id="CAF27348">
    <property type="protein sequence ID" value="CAF27348"/>
    <property type="gene ID" value="BH05400"/>
</dbReference>
<dbReference type="GeneID" id="92985196"/>
<dbReference type="KEGG" id="bhe:BH05400"/>
<dbReference type="eggNOG" id="COG0030">
    <property type="taxonomic scope" value="Bacteria"/>
</dbReference>
<dbReference type="OrthoDB" id="9814755at2"/>
<dbReference type="Proteomes" id="UP000000421">
    <property type="component" value="Chromosome"/>
</dbReference>
<dbReference type="GO" id="GO:0005829">
    <property type="term" value="C:cytosol"/>
    <property type="evidence" value="ECO:0007669"/>
    <property type="project" value="TreeGrafter"/>
</dbReference>
<dbReference type="GO" id="GO:0052908">
    <property type="term" value="F:16S rRNA (adenine(1518)-N(6)/adenine(1519)-N(6))-dimethyltransferase activity"/>
    <property type="evidence" value="ECO:0007669"/>
    <property type="project" value="UniProtKB-EC"/>
</dbReference>
<dbReference type="GO" id="GO:0003723">
    <property type="term" value="F:RNA binding"/>
    <property type="evidence" value="ECO:0007669"/>
    <property type="project" value="UniProtKB-KW"/>
</dbReference>
<dbReference type="CDD" id="cd02440">
    <property type="entry name" value="AdoMet_MTases"/>
    <property type="match status" value="1"/>
</dbReference>
<dbReference type="FunFam" id="1.10.8.100:FF:000001">
    <property type="entry name" value="Ribosomal RNA small subunit methyltransferase A"/>
    <property type="match status" value="1"/>
</dbReference>
<dbReference type="Gene3D" id="1.10.8.100">
    <property type="entry name" value="Ribosomal RNA adenine dimethylase-like, domain 2"/>
    <property type="match status" value="1"/>
</dbReference>
<dbReference type="Gene3D" id="3.40.50.150">
    <property type="entry name" value="Vaccinia Virus protein VP39"/>
    <property type="match status" value="1"/>
</dbReference>
<dbReference type="HAMAP" id="MF_00607">
    <property type="entry name" value="16SrRNA_methyltr_A"/>
    <property type="match status" value="1"/>
</dbReference>
<dbReference type="InterPro" id="IPR001737">
    <property type="entry name" value="KsgA/Erm"/>
</dbReference>
<dbReference type="InterPro" id="IPR023165">
    <property type="entry name" value="rRNA_Ade_diMease-like_C"/>
</dbReference>
<dbReference type="InterPro" id="IPR020596">
    <property type="entry name" value="rRNA_Ade_Mease_Trfase_CS"/>
</dbReference>
<dbReference type="InterPro" id="IPR020598">
    <property type="entry name" value="rRNA_Ade_methylase_Trfase_N"/>
</dbReference>
<dbReference type="InterPro" id="IPR011530">
    <property type="entry name" value="rRNA_adenine_dimethylase"/>
</dbReference>
<dbReference type="InterPro" id="IPR029063">
    <property type="entry name" value="SAM-dependent_MTases_sf"/>
</dbReference>
<dbReference type="NCBIfam" id="TIGR00755">
    <property type="entry name" value="ksgA"/>
    <property type="match status" value="1"/>
</dbReference>
<dbReference type="PANTHER" id="PTHR11727">
    <property type="entry name" value="DIMETHYLADENOSINE TRANSFERASE"/>
    <property type="match status" value="1"/>
</dbReference>
<dbReference type="PANTHER" id="PTHR11727:SF7">
    <property type="entry name" value="DIMETHYLADENOSINE TRANSFERASE-RELATED"/>
    <property type="match status" value="1"/>
</dbReference>
<dbReference type="Pfam" id="PF00398">
    <property type="entry name" value="RrnaAD"/>
    <property type="match status" value="1"/>
</dbReference>
<dbReference type="SMART" id="SM00650">
    <property type="entry name" value="rADc"/>
    <property type="match status" value="1"/>
</dbReference>
<dbReference type="SUPFAM" id="SSF53335">
    <property type="entry name" value="S-adenosyl-L-methionine-dependent methyltransferases"/>
    <property type="match status" value="1"/>
</dbReference>
<dbReference type="PROSITE" id="PS01131">
    <property type="entry name" value="RRNA_A_DIMETH"/>
    <property type="match status" value="1"/>
</dbReference>
<dbReference type="PROSITE" id="PS51689">
    <property type="entry name" value="SAM_RNA_A_N6_MT"/>
    <property type="match status" value="1"/>
</dbReference>
<proteinExistence type="inferred from homology"/>
<name>RSMA_BARHE</name>
<keyword id="KW-0963">Cytoplasm</keyword>
<keyword id="KW-0489">Methyltransferase</keyword>
<keyword id="KW-0694">RNA-binding</keyword>
<keyword id="KW-0698">rRNA processing</keyword>
<keyword id="KW-0949">S-adenosyl-L-methionine</keyword>
<keyword id="KW-0808">Transferase</keyword>
<sequence>MPIDSLPPLREVINTYGLQAHKSLGQNFLFDLNLTSKIAHQAGNIEGKPVIEVGPGPGGLTRALLAKGAIVTAIERDERCIPALLEIEKHYPQKLKIICNDALKQDFSKLFEISPEKPRIIANLPYNIGTQLLLNWLLAEPWPPFYESMTLMFQREVAQRITAKPQSAHYGRLSVLTGWRTIAKIAFDVPPQAFIPAPKITSSVVHIIPRTQPLTCSAQKLSFVTKTAFGQRRKMLRQNLKTLGGEVLLEKAGIDETRRAETLEISEFVTLANLVI</sequence>
<protein>
    <recommendedName>
        <fullName evidence="1">Ribosomal RNA small subunit methyltransferase A</fullName>
        <ecNumber evidence="1">2.1.1.182</ecNumber>
    </recommendedName>
    <alternativeName>
        <fullName evidence="1">16S rRNA (adenine(1518)-N(6)/adenine(1519)-N(6))-dimethyltransferase</fullName>
    </alternativeName>
    <alternativeName>
        <fullName evidence="1">16S rRNA dimethyladenosine transferase</fullName>
    </alternativeName>
    <alternativeName>
        <fullName evidence="1">16S rRNA dimethylase</fullName>
    </alternativeName>
    <alternativeName>
        <fullName evidence="1">S-adenosylmethionine-6-N', N'-adenosyl(rRNA) dimethyltransferase</fullName>
    </alternativeName>
</protein>